<name>FOLD_DEHMC</name>
<organism>
    <name type="scientific">Dehalococcoides mccartyi (strain CBDB1)</name>
    <dbReference type="NCBI Taxonomy" id="255470"/>
    <lineage>
        <taxon>Bacteria</taxon>
        <taxon>Bacillati</taxon>
        <taxon>Chloroflexota</taxon>
        <taxon>Dehalococcoidia</taxon>
        <taxon>Dehalococcoidales</taxon>
        <taxon>Dehalococcoidaceae</taxon>
        <taxon>Dehalococcoides</taxon>
    </lineage>
</organism>
<proteinExistence type="inferred from homology"/>
<reference key="1">
    <citation type="journal article" date="2005" name="Nat. Biotechnol.">
        <title>Genome sequence of the chlorinated compound-respiring bacterium Dehalococcoides species strain CBDB1.</title>
        <authorList>
            <person name="Kube M."/>
            <person name="Beck A."/>
            <person name="Zinder S.H."/>
            <person name="Kuhl H."/>
            <person name="Reinhardt R."/>
            <person name="Adrian L."/>
        </authorList>
    </citation>
    <scope>NUCLEOTIDE SEQUENCE [LARGE SCALE GENOMIC DNA]</scope>
    <source>
        <strain>CBDB1</strain>
    </source>
</reference>
<accession>Q3ZX43</accession>
<sequence length="296" mass="31361">MSAHIINGTEIAAAIREEIRSEVTALKTKAGIVPGLATVLVGDDPASHSYVDSKIKMCQNLGIYSEHHPLPQNATNEDLLTLIAKLNADPKISGILVQVPLPAQISESLVLNAINPDKDVDGFHPVNVGRMCLGEPCFLPCTPHGVQELLIRSGIKIEGTHVVIVGRSNLVGKPLANILLQKAPGANATVTICHSGTKNLPEITRQADILVAAMGKPKFITADMVREGAVVIDVGTTCIGYTPEGKRILSGDVDFEEVKEKAFAITPVPKGVGPMTIIMLMLNTLTAAKRAVGLIK</sequence>
<protein>
    <recommendedName>
        <fullName evidence="1">Bifunctional protein FolD</fullName>
    </recommendedName>
    <domain>
        <recommendedName>
            <fullName evidence="1">Methylenetetrahydrofolate dehydrogenase</fullName>
            <ecNumber evidence="1">1.5.1.5</ecNumber>
        </recommendedName>
    </domain>
    <domain>
        <recommendedName>
            <fullName evidence="1">Methenyltetrahydrofolate cyclohydrolase</fullName>
            <ecNumber evidence="1">3.5.4.9</ecNumber>
        </recommendedName>
    </domain>
</protein>
<gene>
    <name evidence="1" type="primary">folD</name>
    <name type="ordered locus">cbdbA656</name>
</gene>
<evidence type="ECO:0000255" key="1">
    <source>
        <dbReference type="HAMAP-Rule" id="MF_01576"/>
    </source>
</evidence>
<keyword id="KW-0028">Amino-acid biosynthesis</keyword>
<keyword id="KW-0368">Histidine biosynthesis</keyword>
<keyword id="KW-0378">Hydrolase</keyword>
<keyword id="KW-0486">Methionine biosynthesis</keyword>
<keyword id="KW-0511">Multifunctional enzyme</keyword>
<keyword id="KW-0521">NADP</keyword>
<keyword id="KW-0554">One-carbon metabolism</keyword>
<keyword id="KW-0560">Oxidoreductase</keyword>
<keyword id="KW-0658">Purine biosynthesis</keyword>
<feature type="chain" id="PRO_0000268331" description="Bifunctional protein FolD">
    <location>
        <begin position="1"/>
        <end position="296"/>
    </location>
</feature>
<feature type="binding site" evidence="1">
    <location>
        <begin position="166"/>
        <end position="168"/>
    </location>
    <ligand>
        <name>NADP(+)</name>
        <dbReference type="ChEBI" id="CHEBI:58349"/>
    </ligand>
</feature>
<feature type="binding site" evidence="1">
    <location>
        <position position="195"/>
    </location>
    <ligand>
        <name>NADP(+)</name>
        <dbReference type="ChEBI" id="CHEBI:58349"/>
    </ligand>
</feature>
<feature type="binding site" evidence="1">
    <location>
        <position position="236"/>
    </location>
    <ligand>
        <name>NADP(+)</name>
        <dbReference type="ChEBI" id="CHEBI:58349"/>
    </ligand>
</feature>
<dbReference type="EC" id="1.5.1.5" evidence="1"/>
<dbReference type="EC" id="3.5.4.9" evidence="1"/>
<dbReference type="EMBL" id="AJ965256">
    <property type="protein sequence ID" value="CAI82824.1"/>
    <property type="molecule type" value="Genomic_DNA"/>
</dbReference>
<dbReference type="RefSeq" id="WP_011309175.1">
    <property type="nucleotide sequence ID" value="NC_007356.1"/>
</dbReference>
<dbReference type="SMR" id="Q3ZX43"/>
<dbReference type="KEGG" id="deh:cbdbA656"/>
<dbReference type="HOGENOM" id="CLU_034045_2_1_0"/>
<dbReference type="UniPathway" id="UPA00193"/>
<dbReference type="Proteomes" id="UP000000433">
    <property type="component" value="Chromosome"/>
</dbReference>
<dbReference type="GO" id="GO:0005829">
    <property type="term" value="C:cytosol"/>
    <property type="evidence" value="ECO:0007669"/>
    <property type="project" value="TreeGrafter"/>
</dbReference>
<dbReference type="GO" id="GO:0004477">
    <property type="term" value="F:methenyltetrahydrofolate cyclohydrolase activity"/>
    <property type="evidence" value="ECO:0007669"/>
    <property type="project" value="UniProtKB-UniRule"/>
</dbReference>
<dbReference type="GO" id="GO:0004488">
    <property type="term" value="F:methylenetetrahydrofolate dehydrogenase (NADP+) activity"/>
    <property type="evidence" value="ECO:0007669"/>
    <property type="project" value="UniProtKB-UniRule"/>
</dbReference>
<dbReference type="GO" id="GO:0000105">
    <property type="term" value="P:L-histidine biosynthetic process"/>
    <property type="evidence" value="ECO:0007669"/>
    <property type="project" value="UniProtKB-KW"/>
</dbReference>
<dbReference type="GO" id="GO:0009086">
    <property type="term" value="P:methionine biosynthetic process"/>
    <property type="evidence" value="ECO:0007669"/>
    <property type="project" value="UniProtKB-KW"/>
</dbReference>
<dbReference type="GO" id="GO:0006164">
    <property type="term" value="P:purine nucleotide biosynthetic process"/>
    <property type="evidence" value="ECO:0007669"/>
    <property type="project" value="UniProtKB-KW"/>
</dbReference>
<dbReference type="GO" id="GO:0035999">
    <property type="term" value="P:tetrahydrofolate interconversion"/>
    <property type="evidence" value="ECO:0007669"/>
    <property type="project" value="UniProtKB-UniRule"/>
</dbReference>
<dbReference type="CDD" id="cd01080">
    <property type="entry name" value="NAD_bind_m-THF_DH_Cyclohyd"/>
    <property type="match status" value="1"/>
</dbReference>
<dbReference type="FunFam" id="3.40.50.720:FF:000189">
    <property type="entry name" value="Bifunctional protein FolD"/>
    <property type="match status" value="1"/>
</dbReference>
<dbReference type="FunFam" id="3.40.50.10860:FF:000005">
    <property type="entry name" value="C-1-tetrahydrofolate synthase, cytoplasmic, putative"/>
    <property type="match status" value="1"/>
</dbReference>
<dbReference type="Gene3D" id="3.40.50.10860">
    <property type="entry name" value="Leucine Dehydrogenase, chain A, domain 1"/>
    <property type="match status" value="1"/>
</dbReference>
<dbReference type="Gene3D" id="3.40.50.720">
    <property type="entry name" value="NAD(P)-binding Rossmann-like Domain"/>
    <property type="match status" value="1"/>
</dbReference>
<dbReference type="HAMAP" id="MF_01576">
    <property type="entry name" value="THF_DHG_CYH"/>
    <property type="match status" value="1"/>
</dbReference>
<dbReference type="InterPro" id="IPR046346">
    <property type="entry name" value="Aminoacid_DH-like_N_sf"/>
</dbReference>
<dbReference type="InterPro" id="IPR036291">
    <property type="entry name" value="NAD(P)-bd_dom_sf"/>
</dbReference>
<dbReference type="InterPro" id="IPR000672">
    <property type="entry name" value="THF_DH/CycHdrlase"/>
</dbReference>
<dbReference type="InterPro" id="IPR020630">
    <property type="entry name" value="THF_DH/CycHdrlase_cat_dom"/>
</dbReference>
<dbReference type="InterPro" id="IPR020867">
    <property type="entry name" value="THF_DH/CycHdrlase_CS"/>
</dbReference>
<dbReference type="InterPro" id="IPR020631">
    <property type="entry name" value="THF_DH/CycHdrlase_NAD-bd_dom"/>
</dbReference>
<dbReference type="PANTHER" id="PTHR48099:SF5">
    <property type="entry name" value="C-1-TETRAHYDROFOLATE SYNTHASE, CYTOPLASMIC"/>
    <property type="match status" value="1"/>
</dbReference>
<dbReference type="PANTHER" id="PTHR48099">
    <property type="entry name" value="C-1-TETRAHYDROFOLATE SYNTHASE, CYTOPLASMIC-RELATED"/>
    <property type="match status" value="1"/>
</dbReference>
<dbReference type="Pfam" id="PF00763">
    <property type="entry name" value="THF_DHG_CYH"/>
    <property type="match status" value="1"/>
</dbReference>
<dbReference type="Pfam" id="PF02882">
    <property type="entry name" value="THF_DHG_CYH_C"/>
    <property type="match status" value="1"/>
</dbReference>
<dbReference type="PRINTS" id="PR00085">
    <property type="entry name" value="THFDHDRGNASE"/>
</dbReference>
<dbReference type="SUPFAM" id="SSF53223">
    <property type="entry name" value="Aminoacid dehydrogenase-like, N-terminal domain"/>
    <property type="match status" value="1"/>
</dbReference>
<dbReference type="SUPFAM" id="SSF51735">
    <property type="entry name" value="NAD(P)-binding Rossmann-fold domains"/>
    <property type="match status" value="1"/>
</dbReference>
<dbReference type="PROSITE" id="PS00767">
    <property type="entry name" value="THF_DHG_CYH_2"/>
    <property type="match status" value="1"/>
</dbReference>
<comment type="function">
    <text evidence="1">Catalyzes the oxidation of 5,10-methylenetetrahydrofolate to 5,10-methenyltetrahydrofolate and then the hydrolysis of 5,10-methenyltetrahydrofolate to 10-formyltetrahydrofolate.</text>
</comment>
<comment type="catalytic activity">
    <reaction evidence="1">
        <text>(6R)-5,10-methylene-5,6,7,8-tetrahydrofolate + NADP(+) = (6R)-5,10-methenyltetrahydrofolate + NADPH</text>
        <dbReference type="Rhea" id="RHEA:22812"/>
        <dbReference type="ChEBI" id="CHEBI:15636"/>
        <dbReference type="ChEBI" id="CHEBI:57455"/>
        <dbReference type="ChEBI" id="CHEBI:57783"/>
        <dbReference type="ChEBI" id="CHEBI:58349"/>
        <dbReference type="EC" id="1.5.1.5"/>
    </reaction>
</comment>
<comment type="catalytic activity">
    <reaction evidence="1">
        <text>(6R)-5,10-methenyltetrahydrofolate + H2O = (6R)-10-formyltetrahydrofolate + H(+)</text>
        <dbReference type="Rhea" id="RHEA:23700"/>
        <dbReference type="ChEBI" id="CHEBI:15377"/>
        <dbReference type="ChEBI" id="CHEBI:15378"/>
        <dbReference type="ChEBI" id="CHEBI:57455"/>
        <dbReference type="ChEBI" id="CHEBI:195366"/>
        <dbReference type="EC" id="3.5.4.9"/>
    </reaction>
</comment>
<comment type="pathway">
    <text evidence="1">One-carbon metabolism; tetrahydrofolate interconversion.</text>
</comment>
<comment type="subunit">
    <text evidence="1">Homodimer.</text>
</comment>
<comment type="similarity">
    <text evidence="1">Belongs to the tetrahydrofolate dehydrogenase/cyclohydrolase family.</text>
</comment>